<protein>
    <recommendedName>
        <fullName evidence="1">Glutamate-1-semialdehyde 2,1-aminomutase</fullName>
        <shortName evidence="1">GSA</shortName>
        <ecNumber evidence="1">5.4.3.8</ecNumber>
    </recommendedName>
    <alternativeName>
        <fullName evidence="1">Glutamate-1-semialdehyde aminotransferase</fullName>
        <shortName evidence="1">GSA-AT</shortName>
    </alternativeName>
</protein>
<keyword id="KW-0963">Cytoplasm</keyword>
<keyword id="KW-0413">Isomerase</keyword>
<keyword id="KW-0627">Porphyrin biosynthesis</keyword>
<keyword id="KW-0663">Pyridoxal phosphate</keyword>
<dbReference type="EC" id="5.4.3.8" evidence="1"/>
<dbReference type="EMBL" id="CP000269">
    <property type="protein sequence ID" value="ABR88327.1"/>
    <property type="molecule type" value="Genomic_DNA"/>
</dbReference>
<dbReference type="RefSeq" id="WP_012080808.1">
    <property type="nucleotide sequence ID" value="NC_009659.1"/>
</dbReference>
<dbReference type="SMR" id="A6T2A2"/>
<dbReference type="STRING" id="375286.mma_2959"/>
<dbReference type="KEGG" id="mms:mma_2959"/>
<dbReference type="eggNOG" id="COG0001">
    <property type="taxonomic scope" value="Bacteria"/>
</dbReference>
<dbReference type="HOGENOM" id="CLU_016922_1_5_4"/>
<dbReference type="OrthoDB" id="3398487at2"/>
<dbReference type="UniPathway" id="UPA00251">
    <property type="reaction ID" value="UER00317"/>
</dbReference>
<dbReference type="Proteomes" id="UP000006388">
    <property type="component" value="Chromosome"/>
</dbReference>
<dbReference type="GO" id="GO:0005737">
    <property type="term" value="C:cytoplasm"/>
    <property type="evidence" value="ECO:0007669"/>
    <property type="project" value="UniProtKB-SubCell"/>
</dbReference>
<dbReference type="GO" id="GO:0042286">
    <property type="term" value="F:glutamate-1-semialdehyde 2,1-aminomutase activity"/>
    <property type="evidence" value="ECO:0007669"/>
    <property type="project" value="UniProtKB-UniRule"/>
</dbReference>
<dbReference type="GO" id="GO:0030170">
    <property type="term" value="F:pyridoxal phosphate binding"/>
    <property type="evidence" value="ECO:0007669"/>
    <property type="project" value="InterPro"/>
</dbReference>
<dbReference type="GO" id="GO:0008483">
    <property type="term" value="F:transaminase activity"/>
    <property type="evidence" value="ECO:0007669"/>
    <property type="project" value="InterPro"/>
</dbReference>
<dbReference type="GO" id="GO:0006782">
    <property type="term" value="P:protoporphyrinogen IX biosynthetic process"/>
    <property type="evidence" value="ECO:0007669"/>
    <property type="project" value="UniProtKB-UniRule"/>
</dbReference>
<dbReference type="CDD" id="cd00610">
    <property type="entry name" value="OAT_like"/>
    <property type="match status" value="1"/>
</dbReference>
<dbReference type="FunFam" id="3.40.640.10:FF:000021">
    <property type="entry name" value="Glutamate-1-semialdehyde 2,1-aminomutase"/>
    <property type="match status" value="1"/>
</dbReference>
<dbReference type="Gene3D" id="3.90.1150.10">
    <property type="entry name" value="Aspartate Aminotransferase, domain 1"/>
    <property type="match status" value="1"/>
</dbReference>
<dbReference type="Gene3D" id="3.40.640.10">
    <property type="entry name" value="Type I PLP-dependent aspartate aminotransferase-like (Major domain)"/>
    <property type="match status" value="1"/>
</dbReference>
<dbReference type="HAMAP" id="MF_00375">
    <property type="entry name" value="HemL_aminotrans_3"/>
    <property type="match status" value="1"/>
</dbReference>
<dbReference type="InterPro" id="IPR004639">
    <property type="entry name" value="4pyrrol_synth_GluAld_NH2Trfase"/>
</dbReference>
<dbReference type="InterPro" id="IPR005814">
    <property type="entry name" value="Aminotrans_3"/>
</dbReference>
<dbReference type="InterPro" id="IPR049704">
    <property type="entry name" value="Aminotrans_3_PPA_site"/>
</dbReference>
<dbReference type="InterPro" id="IPR015424">
    <property type="entry name" value="PyrdxlP-dep_Trfase"/>
</dbReference>
<dbReference type="InterPro" id="IPR015421">
    <property type="entry name" value="PyrdxlP-dep_Trfase_major"/>
</dbReference>
<dbReference type="InterPro" id="IPR015422">
    <property type="entry name" value="PyrdxlP-dep_Trfase_small"/>
</dbReference>
<dbReference type="NCBIfam" id="TIGR00713">
    <property type="entry name" value="hemL"/>
    <property type="match status" value="1"/>
</dbReference>
<dbReference type="NCBIfam" id="NF000818">
    <property type="entry name" value="PRK00062.1"/>
    <property type="match status" value="1"/>
</dbReference>
<dbReference type="PANTHER" id="PTHR43713">
    <property type="entry name" value="GLUTAMATE-1-SEMIALDEHYDE 2,1-AMINOMUTASE"/>
    <property type="match status" value="1"/>
</dbReference>
<dbReference type="PANTHER" id="PTHR43713:SF3">
    <property type="entry name" value="GLUTAMATE-1-SEMIALDEHYDE 2,1-AMINOMUTASE 1, CHLOROPLASTIC-RELATED"/>
    <property type="match status" value="1"/>
</dbReference>
<dbReference type="Pfam" id="PF00202">
    <property type="entry name" value="Aminotran_3"/>
    <property type="match status" value="1"/>
</dbReference>
<dbReference type="SUPFAM" id="SSF53383">
    <property type="entry name" value="PLP-dependent transferases"/>
    <property type="match status" value="1"/>
</dbReference>
<dbReference type="PROSITE" id="PS00600">
    <property type="entry name" value="AA_TRANSFER_CLASS_3"/>
    <property type="match status" value="1"/>
</dbReference>
<name>GSA_JANMA</name>
<proteinExistence type="inferred from homology"/>
<reference key="1">
    <citation type="journal article" date="2007" name="PLoS Genet.">
        <title>Genome analysis of Minibacterium massiliensis highlights the convergent evolution of water-living bacteria.</title>
        <authorList>
            <person name="Audic S."/>
            <person name="Robert C."/>
            <person name="Campagna B."/>
            <person name="Parinello H."/>
            <person name="Claverie J.-M."/>
            <person name="Raoult D."/>
            <person name="Drancourt M."/>
        </authorList>
    </citation>
    <scope>NUCLEOTIDE SEQUENCE [LARGE SCALE GENOMIC DNA]</scope>
    <source>
        <strain>Marseille</strain>
    </source>
</reference>
<evidence type="ECO:0000255" key="1">
    <source>
        <dbReference type="HAMAP-Rule" id="MF_00375"/>
    </source>
</evidence>
<feature type="chain" id="PRO_1000059992" description="Glutamate-1-semialdehyde 2,1-aminomutase">
    <location>
        <begin position="1"/>
        <end position="432"/>
    </location>
</feature>
<feature type="modified residue" description="N6-(pyridoxal phosphate)lysine" evidence="1">
    <location>
        <position position="266"/>
    </location>
</feature>
<accession>A6T2A2</accession>
<organism>
    <name type="scientific">Janthinobacterium sp. (strain Marseille)</name>
    <name type="common">Minibacterium massiliensis</name>
    <dbReference type="NCBI Taxonomy" id="375286"/>
    <lineage>
        <taxon>Bacteria</taxon>
        <taxon>Pseudomonadati</taxon>
        <taxon>Pseudomonadota</taxon>
        <taxon>Betaproteobacteria</taxon>
        <taxon>Burkholderiales</taxon>
        <taxon>Oxalobacteraceae</taxon>
        <taxon>Janthinobacterium</taxon>
    </lineage>
</organism>
<gene>
    <name evidence="1" type="primary">hemL</name>
    <name type="ordered locus">mma_2959</name>
</gene>
<sequence>MSSKNDQLFARAQLSTPGGVNSPVRAFRSVGGTPRFITKAEGPYFWDADDRRYIDYIGSWGPAIVGHAHPDVVKAVQDAATRGLSFGAPTEAEIEMAELICRLVPSIEQVRLVSSGTEAAMSALRLARGATGRDKIIKFEGCYHGHADSLLVKAGSGLLTFGNPTSAGVPEDFAKHTLVLDYNDPAQLENVFKEMGDSIACVIVEPVAGNMNLLPATPEFLQTMRRVCTQYGAVMILDEVMSGFRVALGGAQSLYGITPDLTVLGKVIGGGLPVAAFGGRADIMRHLAPLGGVYQAGTLSGNPVTVAAGMATLKLIQAPGFYENLTAQTTKLVHGFSAAAREADIAFCANSVGGMFGLYFASEVPVSYDTMMKCDKTRFNAFFHAMLDAGVYLAPSAFEAGFVSAQHDDAVIDSSIKAARAAFAQLADDCDD</sequence>
<comment type="catalytic activity">
    <reaction evidence="1">
        <text>(S)-4-amino-5-oxopentanoate = 5-aminolevulinate</text>
        <dbReference type="Rhea" id="RHEA:14265"/>
        <dbReference type="ChEBI" id="CHEBI:57501"/>
        <dbReference type="ChEBI" id="CHEBI:356416"/>
        <dbReference type="EC" id="5.4.3.8"/>
    </reaction>
</comment>
<comment type="cofactor">
    <cofactor evidence="1">
        <name>pyridoxal 5'-phosphate</name>
        <dbReference type="ChEBI" id="CHEBI:597326"/>
    </cofactor>
</comment>
<comment type="pathway">
    <text evidence="1">Porphyrin-containing compound metabolism; protoporphyrin-IX biosynthesis; 5-aminolevulinate from L-glutamyl-tRNA(Glu): step 2/2.</text>
</comment>
<comment type="subunit">
    <text evidence="1">Homodimer.</text>
</comment>
<comment type="subcellular location">
    <subcellularLocation>
        <location evidence="1">Cytoplasm</location>
    </subcellularLocation>
</comment>
<comment type="similarity">
    <text evidence="1">Belongs to the class-III pyridoxal-phosphate-dependent aminotransferase family. HemL subfamily.</text>
</comment>